<comment type="catalytic activity">
    <reaction>
        <text>O-phospho-L-seryl-[protein] + H2O = L-seryl-[protein] + phosphate</text>
        <dbReference type="Rhea" id="RHEA:20629"/>
        <dbReference type="Rhea" id="RHEA-COMP:9863"/>
        <dbReference type="Rhea" id="RHEA-COMP:11604"/>
        <dbReference type="ChEBI" id="CHEBI:15377"/>
        <dbReference type="ChEBI" id="CHEBI:29999"/>
        <dbReference type="ChEBI" id="CHEBI:43474"/>
        <dbReference type="ChEBI" id="CHEBI:83421"/>
        <dbReference type="EC" id="3.1.3.16"/>
    </reaction>
</comment>
<comment type="catalytic activity">
    <reaction>
        <text>O-phospho-L-threonyl-[protein] + H2O = L-threonyl-[protein] + phosphate</text>
        <dbReference type="Rhea" id="RHEA:47004"/>
        <dbReference type="Rhea" id="RHEA-COMP:11060"/>
        <dbReference type="Rhea" id="RHEA-COMP:11605"/>
        <dbReference type="ChEBI" id="CHEBI:15377"/>
        <dbReference type="ChEBI" id="CHEBI:30013"/>
        <dbReference type="ChEBI" id="CHEBI:43474"/>
        <dbReference type="ChEBI" id="CHEBI:61977"/>
        <dbReference type="EC" id="3.1.3.16"/>
    </reaction>
</comment>
<comment type="cofactor">
    <cofactor evidence="1">
        <name>Mg(2+)</name>
        <dbReference type="ChEBI" id="CHEBI:18420"/>
    </cofactor>
    <cofactor evidence="1">
        <name>Mn(2+)</name>
        <dbReference type="ChEBI" id="CHEBI:29035"/>
    </cofactor>
    <text evidence="1">Binds 2 magnesium or manganese ions per subunit.</text>
</comment>
<comment type="subcellular location">
    <subcellularLocation>
        <location evidence="5">Membrane</location>
        <topology evidence="5">Single-pass membrane protein</topology>
    </subcellularLocation>
</comment>
<comment type="similarity">
    <text evidence="5">Belongs to the PP2C family.</text>
</comment>
<comment type="sequence caution" evidence="5">
    <conflict type="erroneous gene model prediction">
        <sequence resource="EMBL-CDS" id="BAD81825"/>
    </conflict>
</comment>
<comment type="sequence caution" evidence="5">
    <conflict type="erroneous gene model prediction">
        <sequence resource="EMBL-CDS" id="BAD81826"/>
    </conflict>
</comment>
<gene>
    <name type="ordered locus">Os01g0846300</name>
    <name type="ordered locus">LOC_Os01g62760</name>
    <name type="ORF">OsJ_003961</name>
    <name evidence="6" type="ORF">OsJ_04060</name>
    <name type="ORF">P0446B05.26-1</name>
    <name type="ORF">P0446B05.26-2</name>
    <name type="ORF">P0446B05.26-3</name>
</gene>
<feature type="chain" id="PRO_0000363255" description="Probable protein phosphatase 2C 9">
    <location>
        <begin position="1"/>
        <end position="414"/>
    </location>
</feature>
<feature type="transmembrane region" description="Helical" evidence="2">
    <location>
        <begin position="15"/>
        <end position="37"/>
    </location>
</feature>
<feature type="domain" description="PPM-type phosphatase" evidence="3">
    <location>
        <begin position="99"/>
        <end position="410"/>
    </location>
</feature>
<feature type="region of interest" description="Disordered" evidence="4">
    <location>
        <begin position="56"/>
        <end position="95"/>
    </location>
</feature>
<feature type="region of interest" description="Disordered" evidence="4">
    <location>
        <begin position="186"/>
        <end position="212"/>
    </location>
</feature>
<feature type="region of interest" description="Disordered" evidence="4">
    <location>
        <begin position="345"/>
        <end position="372"/>
    </location>
</feature>
<feature type="compositionally biased region" description="Basic and acidic residues" evidence="4">
    <location>
        <begin position="186"/>
        <end position="195"/>
    </location>
</feature>
<feature type="compositionally biased region" description="Low complexity" evidence="4">
    <location>
        <begin position="355"/>
        <end position="369"/>
    </location>
</feature>
<feature type="binding site" evidence="1">
    <location>
        <position position="136"/>
    </location>
    <ligand>
        <name>Mn(2+)</name>
        <dbReference type="ChEBI" id="CHEBI:29035"/>
        <label>1</label>
    </ligand>
</feature>
<feature type="binding site" evidence="1">
    <location>
        <position position="136"/>
    </location>
    <ligand>
        <name>Mn(2+)</name>
        <dbReference type="ChEBI" id="CHEBI:29035"/>
        <label>2</label>
    </ligand>
</feature>
<feature type="binding site" evidence="1">
    <location>
        <position position="137"/>
    </location>
    <ligand>
        <name>Mn(2+)</name>
        <dbReference type="ChEBI" id="CHEBI:29035"/>
        <label>1</label>
    </ligand>
</feature>
<feature type="binding site" evidence="1">
    <location>
        <position position="319"/>
    </location>
    <ligand>
        <name>Mn(2+)</name>
        <dbReference type="ChEBI" id="CHEBI:29035"/>
        <label>2</label>
    </ligand>
</feature>
<feature type="binding site" evidence="1">
    <location>
        <position position="401"/>
    </location>
    <ligand>
        <name>Mn(2+)</name>
        <dbReference type="ChEBI" id="CHEBI:29035"/>
        <label>2</label>
    </ligand>
</feature>
<feature type="sequence conflict" description="In Ref. 6; AK065949." evidence="5" ref="6">
    <original>R</original>
    <variation>H</variation>
    <location>
        <position position="72"/>
    </location>
</feature>
<feature type="sequence conflict" description="In Ref. 6; AK065949." evidence="5" ref="6">
    <original>V</original>
    <variation>M</variation>
    <location>
        <position position="334"/>
    </location>
</feature>
<organism>
    <name type="scientific">Oryza sativa subsp. japonica</name>
    <name type="common">Rice</name>
    <dbReference type="NCBI Taxonomy" id="39947"/>
    <lineage>
        <taxon>Eukaryota</taxon>
        <taxon>Viridiplantae</taxon>
        <taxon>Streptophyta</taxon>
        <taxon>Embryophyta</taxon>
        <taxon>Tracheophyta</taxon>
        <taxon>Spermatophyta</taxon>
        <taxon>Magnoliopsida</taxon>
        <taxon>Liliopsida</taxon>
        <taxon>Poales</taxon>
        <taxon>Poaceae</taxon>
        <taxon>BOP clade</taxon>
        <taxon>Oryzoideae</taxon>
        <taxon>Oryzeae</taxon>
        <taxon>Oryzinae</taxon>
        <taxon>Oryza</taxon>
        <taxon>Oryza sativa</taxon>
    </lineage>
</organism>
<evidence type="ECO:0000250" key="1"/>
<evidence type="ECO:0000255" key="2"/>
<evidence type="ECO:0000255" key="3">
    <source>
        <dbReference type="PROSITE-ProRule" id="PRU01082"/>
    </source>
</evidence>
<evidence type="ECO:0000256" key="4">
    <source>
        <dbReference type="SAM" id="MobiDB-lite"/>
    </source>
</evidence>
<evidence type="ECO:0000305" key="5"/>
<evidence type="ECO:0000312" key="6">
    <source>
        <dbReference type="EMBL" id="EEE55662.1"/>
    </source>
</evidence>
<proteinExistence type="evidence at transcript level"/>
<protein>
    <recommendedName>
        <fullName>Probable protein phosphatase 2C 9</fullName>
        <shortName>OsPP2C09</shortName>
        <ecNumber>3.1.3.16</ecNumber>
    </recommendedName>
</protein>
<sequence>MAEICCEEAMSPPATATAAVAAAVSASAAAAVSSAIDRRRRRMEMRRIRIASDLELQAGEDGRPGKRQRLARTASGAPRPDEDSASERPSCGRTEEFPRYGVTAVCGRRREMEDAVSIRPDFLPASGKFHFYGVFDGHGCSHVATTCQDRMHEIVAEEHNKGASGEVAPWRDVMEKSFARMDGEVGNRASTRSDDEPACPCEQQTPSRRDHAGSTAVVAVVSPTQVVVANAGDSRAVISRAGVPVALSVDHKPDRPDELERIEAAGGRVIYWDGARVLGVLAMSRAIGDGYLKPYVTSEPEVTVTERTDDDECLILASDGLWDVVTNEMACEVVRACFHNNGPPAPAARPSGVPSSAEAAETENGGAASVKGISKAESSDKACSDAAMLLTKLALARRSADNVSVVVVDLRRGL</sequence>
<name>P2C09_ORYSJ</name>
<reference key="1">
    <citation type="journal article" date="2002" name="Nature">
        <title>The genome sequence and structure of rice chromosome 1.</title>
        <authorList>
            <person name="Sasaki T."/>
            <person name="Matsumoto T."/>
            <person name="Yamamoto K."/>
            <person name="Sakata K."/>
            <person name="Baba T."/>
            <person name="Katayose Y."/>
            <person name="Wu J."/>
            <person name="Niimura Y."/>
            <person name="Cheng Z."/>
            <person name="Nagamura Y."/>
            <person name="Antonio B.A."/>
            <person name="Kanamori H."/>
            <person name="Hosokawa S."/>
            <person name="Masukawa M."/>
            <person name="Arikawa K."/>
            <person name="Chiden Y."/>
            <person name="Hayashi M."/>
            <person name="Okamoto M."/>
            <person name="Ando T."/>
            <person name="Aoki H."/>
            <person name="Arita K."/>
            <person name="Hamada M."/>
            <person name="Harada C."/>
            <person name="Hijishita S."/>
            <person name="Honda M."/>
            <person name="Ichikawa Y."/>
            <person name="Idonuma A."/>
            <person name="Iijima M."/>
            <person name="Ikeda M."/>
            <person name="Ikeno M."/>
            <person name="Ito S."/>
            <person name="Ito T."/>
            <person name="Ito Y."/>
            <person name="Ito Y."/>
            <person name="Iwabuchi A."/>
            <person name="Kamiya K."/>
            <person name="Karasawa W."/>
            <person name="Katagiri S."/>
            <person name="Kikuta A."/>
            <person name="Kobayashi N."/>
            <person name="Kono I."/>
            <person name="Machita K."/>
            <person name="Maehara T."/>
            <person name="Mizuno H."/>
            <person name="Mizubayashi T."/>
            <person name="Mukai Y."/>
            <person name="Nagasaki H."/>
            <person name="Nakashima M."/>
            <person name="Nakama Y."/>
            <person name="Nakamichi Y."/>
            <person name="Nakamura M."/>
            <person name="Namiki N."/>
            <person name="Negishi M."/>
            <person name="Ohta I."/>
            <person name="Ono N."/>
            <person name="Saji S."/>
            <person name="Sakai K."/>
            <person name="Shibata M."/>
            <person name="Shimokawa T."/>
            <person name="Shomura A."/>
            <person name="Song J."/>
            <person name="Takazaki Y."/>
            <person name="Terasawa K."/>
            <person name="Tsuji K."/>
            <person name="Waki K."/>
            <person name="Yamagata H."/>
            <person name="Yamane H."/>
            <person name="Yoshiki S."/>
            <person name="Yoshihara R."/>
            <person name="Yukawa K."/>
            <person name="Zhong H."/>
            <person name="Iwama H."/>
            <person name="Endo T."/>
            <person name="Ito H."/>
            <person name="Hahn J.H."/>
            <person name="Kim H.-I."/>
            <person name="Eun M.-Y."/>
            <person name="Yano M."/>
            <person name="Jiang J."/>
            <person name="Gojobori T."/>
        </authorList>
    </citation>
    <scope>NUCLEOTIDE SEQUENCE [LARGE SCALE GENOMIC DNA]</scope>
    <source>
        <strain>cv. Nipponbare</strain>
    </source>
</reference>
<reference key="2">
    <citation type="journal article" date="2005" name="Nature">
        <title>The map-based sequence of the rice genome.</title>
        <authorList>
            <consortium name="International rice genome sequencing project (IRGSP)"/>
        </authorList>
    </citation>
    <scope>NUCLEOTIDE SEQUENCE [LARGE SCALE GENOMIC DNA]</scope>
    <source>
        <strain>cv. Nipponbare</strain>
    </source>
</reference>
<reference key="3">
    <citation type="journal article" date="2008" name="Nucleic Acids Res.">
        <title>The rice annotation project database (RAP-DB): 2008 update.</title>
        <authorList>
            <consortium name="The rice annotation project (RAP)"/>
        </authorList>
    </citation>
    <scope>GENOME REANNOTATION</scope>
    <source>
        <strain>cv. Nipponbare</strain>
    </source>
</reference>
<reference key="4">
    <citation type="journal article" date="2013" name="Rice">
        <title>Improvement of the Oryza sativa Nipponbare reference genome using next generation sequence and optical map data.</title>
        <authorList>
            <person name="Kawahara Y."/>
            <person name="de la Bastide M."/>
            <person name="Hamilton J.P."/>
            <person name="Kanamori H."/>
            <person name="McCombie W.R."/>
            <person name="Ouyang S."/>
            <person name="Schwartz D.C."/>
            <person name="Tanaka T."/>
            <person name="Wu J."/>
            <person name="Zhou S."/>
            <person name="Childs K.L."/>
            <person name="Davidson R.M."/>
            <person name="Lin H."/>
            <person name="Quesada-Ocampo L."/>
            <person name="Vaillancourt B."/>
            <person name="Sakai H."/>
            <person name="Lee S.S."/>
            <person name="Kim J."/>
            <person name="Numa H."/>
            <person name="Itoh T."/>
            <person name="Buell C.R."/>
            <person name="Matsumoto T."/>
        </authorList>
    </citation>
    <scope>GENOME REANNOTATION</scope>
    <source>
        <strain>cv. Nipponbare</strain>
    </source>
</reference>
<reference key="5">
    <citation type="journal article" date="2005" name="PLoS Biol.">
        <title>The genomes of Oryza sativa: a history of duplications.</title>
        <authorList>
            <person name="Yu J."/>
            <person name="Wang J."/>
            <person name="Lin W."/>
            <person name="Li S."/>
            <person name="Li H."/>
            <person name="Zhou J."/>
            <person name="Ni P."/>
            <person name="Dong W."/>
            <person name="Hu S."/>
            <person name="Zeng C."/>
            <person name="Zhang J."/>
            <person name="Zhang Y."/>
            <person name="Li R."/>
            <person name="Xu Z."/>
            <person name="Li S."/>
            <person name="Li X."/>
            <person name="Zheng H."/>
            <person name="Cong L."/>
            <person name="Lin L."/>
            <person name="Yin J."/>
            <person name="Geng J."/>
            <person name="Li G."/>
            <person name="Shi J."/>
            <person name="Liu J."/>
            <person name="Lv H."/>
            <person name="Li J."/>
            <person name="Wang J."/>
            <person name="Deng Y."/>
            <person name="Ran L."/>
            <person name="Shi X."/>
            <person name="Wang X."/>
            <person name="Wu Q."/>
            <person name="Li C."/>
            <person name="Ren X."/>
            <person name="Wang J."/>
            <person name="Wang X."/>
            <person name="Li D."/>
            <person name="Liu D."/>
            <person name="Zhang X."/>
            <person name="Ji Z."/>
            <person name="Zhao W."/>
            <person name="Sun Y."/>
            <person name="Zhang Z."/>
            <person name="Bao J."/>
            <person name="Han Y."/>
            <person name="Dong L."/>
            <person name="Ji J."/>
            <person name="Chen P."/>
            <person name="Wu S."/>
            <person name="Liu J."/>
            <person name="Xiao Y."/>
            <person name="Bu D."/>
            <person name="Tan J."/>
            <person name="Yang L."/>
            <person name="Ye C."/>
            <person name="Zhang J."/>
            <person name="Xu J."/>
            <person name="Zhou Y."/>
            <person name="Yu Y."/>
            <person name="Zhang B."/>
            <person name="Zhuang S."/>
            <person name="Wei H."/>
            <person name="Liu B."/>
            <person name="Lei M."/>
            <person name="Yu H."/>
            <person name="Li Y."/>
            <person name="Xu H."/>
            <person name="Wei S."/>
            <person name="He X."/>
            <person name="Fang L."/>
            <person name="Zhang Z."/>
            <person name="Zhang Y."/>
            <person name="Huang X."/>
            <person name="Su Z."/>
            <person name="Tong W."/>
            <person name="Li J."/>
            <person name="Tong Z."/>
            <person name="Li S."/>
            <person name="Ye J."/>
            <person name="Wang L."/>
            <person name="Fang L."/>
            <person name="Lei T."/>
            <person name="Chen C.-S."/>
            <person name="Chen H.-C."/>
            <person name="Xu Z."/>
            <person name="Li H."/>
            <person name="Huang H."/>
            <person name="Zhang F."/>
            <person name="Xu H."/>
            <person name="Li N."/>
            <person name="Zhao C."/>
            <person name="Li S."/>
            <person name="Dong L."/>
            <person name="Huang Y."/>
            <person name="Li L."/>
            <person name="Xi Y."/>
            <person name="Qi Q."/>
            <person name="Li W."/>
            <person name="Zhang B."/>
            <person name="Hu W."/>
            <person name="Zhang Y."/>
            <person name="Tian X."/>
            <person name="Jiao Y."/>
            <person name="Liang X."/>
            <person name="Jin J."/>
            <person name="Gao L."/>
            <person name="Zheng W."/>
            <person name="Hao B."/>
            <person name="Liu S.-M."/>
            <person name="Wang W."/>
            <person name="Yuan L."/>
            <person name="Cao M."/>
            <person name="McDermott J."/>
            <person name="Samudrala R."/>
            <person name="Wang J."/>
            <person name="Wong G.K.-S."/>
            <person name="Yang H."/>
        </authorList>
    </citation>
    <scope>NUCLEOTIDE SEQUENCE [LARGE SCALE GENOMIC DNA]</scope>
    <source>
        <strain>cv. Nipponbare</strain>
    </source>
</reference>
<reference key="6">
    <citation type="journal article" date="2003" name="Science">
        <title>Collection, mapping, and annotation of over 28,000 cDNA clones from japonica rice.</title>
        <authorList>
            <consortium name="The rice full-length cDNA consortium"/>
        </authorList>
    </citation>
    <scope>NUCLEOTIDE SEQUENCE [LARGE SCALE MRNA]</scope>
    <source>
        <strain>cv. Nipponbare</strain>
    </source>
</reference>
<reference key="7">
    <citation type="journal article" date="2008" name="BMC Genomics">
        <title>Genome-wide and expression analysis of protein phosphatase 2C in rice and Arabidopsis.</title>
        <authorList>
            <person name="Xue T."/>
            <person name="Wang D."/>
            <person name="Zhang S."/>
            <person name="Ehlting J."/>
            <person name="Ni F."/>
            <person name="Jacab S."/>
            <person name="Zheng C."/>
            <person name="Zhong Y."/>
        </authorList>
    </citation>
    <scope>GENE FAMILY</scope>
    <scope>NOMENCLATURE</scope>
</reference>
<keyword id="KW-0378">Hydrolase</keyword>
<keyword id="KW-0460">Magnesium</keyword>
<keyword id="KW-0464">Manganese</keyword>
<keyword id="KW-0472">Membrane</keyword>
<keyword id="KW-0479">Metal-binding</keyword>
<keyword id="KW-0904">Protein phosphatase</keyword>
<keyword id="KW-1185">Reference proteome</keyword>
<keyword id="KW-0812">Transmembrane</keyword>
<keyword id="KW-1133">Transmembrane helix</keyword>
<dbReference type="EC" id="3.1.3.16"/>
<dbReference type="EMBL" id="AP003251">
    <property type="protein sequence ID" value="BAD81824.1"/>
    <property type="molecule type" value="Genomic_DNA"/>
</dbReference>
<dbReference type="EMBL" id="AP003251">
    <property type="protein sequence ID" value="BAD81825.1"/>
    <property type="status" value="ALT_SEQ"/>
    <property type="molecule type" value="Genomic_DNA"/>
</dbReference>
<dbReference type="EMBL" id="AP003251">
    <property type="protein sequence ID" value="BAD81826.1"/>
    <property type="status" value="ALT_SEQ"/>
    <property type="molecule type" value="Genomic_DNA"/>
</dbReference>
<dbReference type="EMBL" id="AP008207">
    <property type="protein sequence ID" value="BAF06702.1"/>
    <property type="molecule type" value="Genomic_DNA"/>
</dbReference>
<dbReference type="EMBL" id="AP014957">
    <property type="protein sequence ID" value="BAS75198.1"/>
    <property type="molecule type" value="Genomic_DNA"/>
</dbReference>
<dbReference type="EMBL" id="CM000138">
    <property type="protein sequence ID" value="EEE55662.1"/>
    <property type="molecule type" value="Genomic_DNA"/>
</dbReference>
<dbReference type="EMBL" id="AK065949">
    <property type="status" value="NOT_ANNOTATED_CDS"/>
    <property type="molecule type" value="mRNA"/>
</dbReference>
<dbReference type="RefSeq" id="XP_015621342.1">
    <property type="nucleotide sequence ID" value="XM_015765856.1"/>
</dbReference>
<dbReference type="SMR" id="Q5N9N2"/>
<dbReference type="FunCoup" id="Q5N9N2">
    <property type="interactions" value="219"/>
</dbReference>
<dbReference type="STRING" id="39947.Q5N9N2"/>
<dbReference type="PaxDb" id="39947-Q5N9N2"/>
<dbReference type="EnsemblPlants" id="Os01t0846300-01">
    <property type="protein sequence ID" value="Os01t0846300-01"/>
    <property type="gene ID" value="Os01g0846300"/>
</dbReference>
<dbReference type="Gramene" id="Os01t0846300-01">
    <property type="protein sequence ID" value="Os01t0846300-01"/>
    <property type="gene ID" value="Os01g0846300"/>
</dbReference>
<dbReference type="KEGG" id="dosa:Os01g0846300"/>
<dbReference type="eggNOG" id="KOG0698">
    <property type="taxonomic scope" value="Eukaryota"/>
</dbReference>
<dbReference type="HOGENOM" id="CLU_013173_20_0_1"/>
<dbReference type="InParanoid" id="Q5N9N2"/>
<dbReference type="OMA" id="HCESAYE"/>
<dbReference type="OrthoDB" id="10264738at2759"/>
<dbReference type="PlantReactome" id="R-OSA-3899351">
    <property type="pathway name" value="Abscisic acid (ABA) mediated signaling"/>
</dbReference>
<dbReference type="Proteomes" id="UP000000763">
    <property type="component" value="Chromosome 1"/>
</dbReference>
<dbReference type="Proteomes" id="UP000007752">
    <property type="component" value="Chromosome 1"/>
</dbReference>
<dbReference type="Proteomes" id="UP000059680">
    <property type="component" value="Chromosome 1"/>
</dbReference>
<dbReference type="ExpressionAtlas" id="Q5N9N2">
    <property type="expression patterns" value="baseline and differential"/>
</dbReference>
<dbReference type="GO" id="GO:0016020">
    <property type="term" value="C:membrane"/>
    <property type="evidence" value="ECO:0007669"/>
    <property type="project" value="UniProtKB-SubCell"/>
</dbReference>
<dbReference type="GO" id="GO:0005634">
    <property type="term" value="C:nucleus"/>
    <property type="evidence" value="ECO:0000318"/>
    <property type="project" value="GO_Central"/>
</dbReference>
<dbReference type="GO" id="GO:0046872">
    <property type="term" value="F:metal ion binding"/>
    <property type="evidence" value="ECO:0007669"/>
    <property type="project" value="UniProtKB-KW"/>
</dbReference>
<dbReference type="GO" id="GO:0004722">
    <property type="term" value="F:protein serine/threonine phosphatase activity"/>
    <property type="evidence" value="ECO:0000318"/>
    <property type="project" value="GO_Central"/>
</dbReference>
<dbReference type="GO" id="GO:1902531">
    <property type="term" value="P:regulation of intracellular signal transduction"/>
    <property type="evidence" value="ECO:0000318"/>
    <property type="project" value="GO_Central"/>
</dbReference>
<dbReference type="CDD" id="cd00143">
    <property type="entry name" value="PP2Cc"/>
    <property type="match status" value="1"/>
</dbReference>
<dbReference type="FunFam" id="3.60.40.10:FF:000046">
    <property type="entry name" value="Probable protein phosphatase 2C 9"/>
    <property type="match status" value="1"/>
</dbReference>
<dbReference type="Gene3D" id="3.60.40.10">
    <property type="entry name" value="PPM-type phosphatase domain"/>
    <property type="match status" value="1"/>
</dbReference>
<dbReference type="InterPro" id="IPR015655">
    <property type="entry name" value="PP2C"/>
</dbReference>
<dbReference type="InterPro" id="IPR000222">
    <property type="entry name" value="PP2C_BS"/>
</dbReference>
<dbReference type="InterPro" id="IPR036457">
    <property type="entry name" value="PPM-type-like_dom_sf"/>
</dbReference>
<dbReference type="InterPro" id="IPR001932">
    <property type="entry name" value="PPM-type_phosphatase-like_dom"/>
</dbReference>
<dbReference type="PANTHER" id="PTHR47992">
    <property type="entry name" value="PROTEIN PHOSPHATASE"/>
    <property type="match status" value="1"/>
</dbReference>
<dbReference type="Pfam" id="PF00481">
    <property type="entry name" value="PP2C"/>
    <property type="match status" value="1"/>
</dbReference>
<dbReference type="SMART" id="SM00332">
    <property type="entry name" value="PP2Cc"/>
    <property type="match status" value="1"/>
</dbReference>
<dbReference type="SUPFAM" id="SSF81606">
    <property type="entry name" value="PP2C-like"/>
    <property type="match status" value="1"/>
</dbReference>
<dbReference type="PROSITE" id="PS01032">
    <property type="entry name" value="PPM_1"/>
    <property type="match status" value="1"/>
</dbReference>
<dbReference type="PROSITE" id="PS51746">
    <property type="entry name" value="PPM_2"/>
    <property type="match status" value="1"/>
</dbReference>
<accession>Q5N9N2</accession>
<accession>A2ZZI9</accession>
<accession>B9EUE1</accession>
<accession>Q5N9N0</accession>
<accession>Q5N9N1</accession>